<reference key="1">
    <citation type="journal article" date="1992" name="Gene">
        <title>Genomic organization and tissue expression of the murine gene encoding the protein beta-aspartate methyltransferase.</title>
        <authorList>
            <person name="Romanik E.A."/>
            <person name="Ladino C.A."/>
            <person name="Killoy L.C."/>
            <person name="D'Ardenne S.C."/>
            <person name="O'Connor C.M."/>
        </authorList>
    </citation>
    <scope>NUCLEOTIDE SEQUENCE [GENOMIC DNA / MRNA] (ISOFORM 1)</scope>
</reference>
<reference key="2">
    <citation type="journal article" date="2004" name="Genome Res.">
        <title>The status, quality, and expansion of the NIH full-length cDNA project: the Mammalian Gene Collection (MGC).</title>
        <authorList>
            <consortium name="The MGC Project Team"/>
        </authorList>
    </citation>
    <scope>NUCLEOTIDE SEQUENCE [LARGE SCALE MRNA] (ISOFORMS 1 AND 2)</scope>
    <source>
        <strain>C57BL/6J</strain>
        <tissue>Brain</tissue>
        <tissue>Testis</tissue>
    </source>
</reference>
<reference key="3">
    <citation type="submission" date="2007-03" db="UniProtKB">
        <authorList>
            <person name="Lubec G."/>
            <person name="Klug S."/>
        </authorList>
    </citation>
    <scope>PROTEIN SEQUENCE OF 82-98</scope>
    <scope>IDENTIFICATION BY MASS SPECTROMETRY</scope>
    <source>
        <tissue>Hippocampus</tissue>
    </source>
</reference>
<reference key="4">
    <citation type="journal article" date="1994" name="Arch. Biochem. Biophys.">
        <title>Structural analysis of transcripts for the protein L-isoaspartyl methyltransferase reveals multiple transcription initiation sites and a distinct pattern of expression in mouse testis: identification of a 5'-flanking sequence with promoter activity.</title>
        <authorList>
            <person name="Galus A."/>
            <person name="Lagos A."/>
            <person name="Romanik E.A."/>
            <person name="O'Connor C.M."/>
        </authorList>
    </citation>
    <scope>NUCLEOTIDE SEQUENCE [MRNA] OF 186-227 (ISOFORM 2)</scope>
</reference>
<reference key="5">
    <citation type="journal article" date="2002" name="J. Biol. Chem.">
        <title>Altered levels of S-adenosylmethionine and S-adenosylhomocysteine in the brains of L-isoaspartyl (D-Aspartyl) O-methyltransferase-deficient mice.</title>
        <authorList>
            <person name="Farrar C."/>
            <person name="Clarke S."/>
        </authorList>
    </citation>
    <scope>FUNCTION</scope>
    <scope>CATALYTIC ACTIVITY</scope>
    <scope>DISRUPTION PHENOTYPE</scope>
</reference>
<reference key="6">
    <citation type="journal article" date="2006" name="J. Biol. Chem.">
        <title>Proteomic identification of novel substrates of a protein isoaspartyl methyltransferase repair enzyme.</title>
        <authorList>
            <person name="Vigneswara V."/>
            <person name="Lowenson J.D."/>
            <person name="Powell C.D."/>
            <person name="Thakur M."/>
            <person name="Bailey K."/>
            <person name="Clarke S."/>
            <person name="Ray D.E."/>
            <person name="Carter W.G."/>
        </authorList>
    </citation>
    <scope>FUNCTION</scope>
    <scope>CATALYTIC ACTIVITY</scope>
    <scope>SUBCELLULAR LOCATION</scope>
</reference>
<reference key="7">
    <citation type="journal article" date="2010" name="Cell">
        <title>A tissue-specific atlas of mouse protein phosphorylation and expression.</title>
        <authorList>
            <person name="Huttlin E.L."/>
            <person name="Jedrychowski M.P."/>
            <person name="Elias J.E."/>
            <person name="Goswami T."/>
            <person name="Rad R."/>
            <person name="Beausoleil S.A."/>
            <person name="Villen J."/>
            <person name="Haas W."/>
            <person name="Sowa M.E."/>
            <person name="Gygi S.P."/>
        </authorList>
    </citation>
    <scope>IDENTIFICATION BY MASS SPECTROMETRY [LARGE SCALE ANALYSIS]</scope>
    <source>
        <tissue>Brain</tissue>
        <tissue>Brown adipose tissue</tissue>
        <tissue>Heart</tissue>
        <tissue>Kidney</tissue>
        <tissue>Liver</tissue>
        <tissue>Lung</tissue>
        <tissue>Pancreas</tissue>
        <tissue>Spleen</tissue>
        <tissue>Testis</tissue>
    </source>
</reference>
<reference key="8">
    <citation type="journal article" date="2010" name="J. Biol. Chem.">
        <title>Repair of isoaspartate formation modulates the interaction of deamidated 4E-BP2 with mTORC1 in brain.</title>
        <authorList>
            <person name="Bidinosti M."/>
            <person name="Martineau Y."/>
            <person name="Frank F."/>
            <person name="Sonenberg N."/>
        </authorList>
    </citation>
    <scope>FUNCTION</scope>
</reference>
<gene>
    <name type="primary">Pcmt1</name>
</gene>
<keyword id="KW-0007">Acetylation</keyword>
<keyword id="KW-0025">Alternative splicing</keyword>
<keyword id="KW-0963">Cytoplasm</keyword>
<keyword id="KW-0903">Direct protein sequencing</keyword>
<keyword id="KW-0489">Methyltransferase</keyword>
<keyword id="KW-1185">Reference proteome</keyword>
<keyword id="KW-0949">S-adenosyl-L-methionine</keyword>
<keyword id="KW-0808">Transferase</keyword>
<name>PIMT_MOUSE</name>
<sequence>MAWKSGGASHSELIHNLRKNGIIKTDKVFEVMLATDRSHYAKSNPYMDSPQSIGFQATISAPHMHAYALELLFDQLHEGAKALDVGSGSGILTACFARMVGNSGKVIGIDHIKELVDDSITNVKKDDPMLLSSGRVRLVVGDGRMGYAEEAPYDAIHVGAAAPVVPQALIDQLKPGGRLILPVGPAGGNQMLEQYDKLQDGSVKMKPLMGVIYVPLTDKEKQWSRWK</sequence>
<evidence type="ECO:0000250" key="1">
    <source>
        <dbReference type="UniProtKB" id="P22061"/>
    </source>
</evidence>
<evidence type="ECO:0000250" key="2">
    <source>
        <dbReference type="UniProtKB" id="Q27869"/>
    </source>
</evidence>
<evidence type="ECO:0000269" key="3">
    <source>
    </source>
</evidence>
<evidence type="ECO:0000269" key="4">
    <source>
    </source>
</evidence>
<evidence type="ECO:0000269" key="5">
    <source>
    </source>
</evidence>
<evidence type="ECO:0000303" key="6">
    <source>
    </source>
</evidence>
<evidence type="ECO:0000303" key="7">
    <source>
    </source>
</evidence>
<evidence type="ECO:0000305" key="8"/>
<evidence type="ECO:0000305" key="9">
    <source>
    </source>
</evidence>
<dbReference type="EC" id="2.1.1.77" evidence="3 4"/>
<dbReference type="EMBL" id="M60320">
    <property type="protein sequence ID" value="AAA92742.1"/>
    <property type="status" value="ALT_SEQ"/>
    <property type="molecule type" value="mRNA"/>
</dbReference>
<dbReference type="EMBL" id="M84684">
    <property type="protein sequence ID" value="AAA74565.1"/>
    <property type="molecule type" value="Genomic_DNA"/>
</dbReference>
<dbReference type="EMBL" id="BC049613">
    <property type="protein sequence ID" value="AAH49613.1"/>
    <property type="status" value="ALT_INIT"/>
    <property type="molecule type" value="mRNA"/>
</dbReference>
<dbReference type="EMBL" id="BC058966">
    <property type="protein sequence ID" value="AAH58966.1"/>
    <property type="molecule type" value="mRNA"/>
</dbReference>
<dbReference type="EMBL" id="S72473">
    <property type="protein sequence ID" value="AAB31369.1"/>
    <property type="molecule type" value="mRNA"/>
</dbReference>
<dbReference type="CCDS" id="CCDS23687.2">
    <molecule id="P23506-1"/>
</dbReference>
<dbReference type="CCDS" id="CCDS83677.1">
    <molecule id="P23506-2"/>
</dbReference>
<dbReference type="PIR" id="JC1248">
    <property type="entry name" value="JC1248"/>
</dbReference>
<dbReference type="RefSeq" id="NP_001334157.2">
    <molecule id="P23506-2"/>
    <property type="nucleotide sequence ID" value="NM_001347228.5"/>
</dbReference>
<dbReference type="RefSeq" id="NP_032812.3">
    <molecule id="P23506-1"/>
    <property type="nucleotide sequence ID" value="NM_008786.6"/>
</dbReference>
<dbReference type="SMR" id="P23506"/>
<dbReference type="FunCoup" id="P23506">
    <property type="interactions" value="1044"/>
</dbReference>
<dbReference type="IntAct" id="P23506">
    <property type="interactions" value="2"/>
</dbReference>
<dbReference type="MINT" id="P23506"/>
<dbReference type="STRING" id="10090.ENSMUSP00000123866"/>
<dbReference type="GlyGen" id="P23506">
    <property type="glycosylation" value="1 site, 1 O-linked glycan (1 site)"/>
</dbReference>
<dbReference type="iPTMnet" id="P23506"/>
<dbReference type="PhosphoSitePlus" id="P23506"/>
<dbReference type="SwissPalm" id="P23506"/>
<dbReference type="REPRODUCTION-2DPAGE" id="P23506"/>
<dbReference type="jPOST" id="P23506"/>
<dbReference type="PaxDb" id="10090-ENSMUSP00000124932"/>
<dbReference type="ProteomicsDB" id="288164">
    <molecule id="P23506-1"/>
</dbReference>
<dbReference type="ProteomicsDB" id="288165">
    <molecule id="P23506-2"/>
</dbReference>
<dbReference type="Pumba" id="P23506"/>
<dbReference type="Ensembl" id="ENSMUST00000159917.8">
    <molecule id="P23506-1"/>
    <property type="protein sequence ID" value="ENSMUSP00000124932.3"/>
    <property type="gene ID" value="ENSMUSG00000019795.18"/>
</dbReference>
<dbReference type="Ensembl" id="ENSMUST00000162606.8">
    <molecule id="P23506-2"/>
    <property type="protein sequence ID" value="ENSMUSP00000123866.3"/>
    <property type="gene ID" value="ENSMUSG00000019795.18"/>
</dbReference>
<dbReference type="Ensembl" id="ENSMUST00000163085.8">
    <molecule id="P23506-1"/>
    <property type="protein sequence ID" value="ENSMUSP00000125144.3"/>
    <property type="gene ID" value="ENSMUSG00000019795.18"/>
</dbReference>
<dbReference type="GeneID" id="18537"/>
<dbReference type="KEGG" id="mmu:18537"/>
<dbReference type="AGR" id="MGI:97502"/>
<dbReference type="CTD" id="5110"/>
<dbReference type="MGI" id="MGI:97502">
    <property type="gene designation" value="Pcmt1"/>
</dbReference>
<dbReference type="eggNOG" id="KOG1661">
    <property type="taxonomic scope" value="Eukaryota"/>
</dbReference>
<dbReference type="GeneTree" id="ENSGT00950000183032"/>
<dbReference type="InParanoid" id="P23506"/>
<dbReference type="OrthoDB" id="73890at2759"/>
<dbReference type="Reactome" id="R-MMU-5676934">
    <property type="pathway name" value="Protein repair"/>
</dbReference>
<dbReference type="ChiTaRS" id="Pcmt1">
    <property type="organism name" value="mouse"/>
</dbReference>
<dbReference type="PRO" id="PR:P23506"/>
<dbReference type="Proteomes" id="UP000000589">
    <property type="component" value="Chromosome 10"/>
</dbReference>
<dbReference type="RNAct" id="P23506">
    <property type="molecule type" value="protein"/>
</dbReference>
<dbReference type="GO" id="GO:0005829">
    <property type="term" value="C:cytosol"/>
    <property type="evidence" value="ECO:0007669"/>
    <property type="project" value="UniProtKB-SubCell"/>
</dbReference>
<dbReference type="GO" id="GO:0004719">
    <property type="term" value="F:protein-L-isoaspartate (D-aspartate) O-methyltransferase activity"/>
    <property type="evidence" value="ECO:0000314"/>
    <property type="project" value="MGI"/>
</dbReference>
<dbReference type="GO" id="GO:0032259">
    <property type="term" value="P:methylation"/>
    <property type="evidence" value="ECO:0007669"/>
    <property type="project" value="UniProtKB-KW"/>
</dbReference>
<dbReference type="GO" id="GO:0036211">
    <property type="term" value="P:protein modification process"/>
    <property type="evidence" value="ECO:0007669"/>
    <property type="project" value="InterPro"/>
</dbReference>
<dbReference type="CDD" id="cd02440">
    <property type="entry name" value="AdoMet_MTases"/>
    <property type="match status" value="1"/>
</dbReference>
<dbReference type="FunFam" id="3.40.50.150:FF:000027">
    <property type="entry name" value="Protein-L-isoaspartate O-methyltransferase"/>
    <property type="match status" value="1"/>
</dbReference>
<dbReference type="Gene3D" id="3.40.50.150">
    <property type="entry name" value="Vaccinia Virus protein VP39"/>
    <property type="match status" value="1"/>
</dbReference>
<dbReference type="InterPro" id="IPR000682">
    <property type="entry name" value="PCMT"/>
</dbReference>
<dbReference type="InterPro" id="IPR029063">
    <property type="entry name" value="SAM-dependent_MTases_sf"/>
</dbReference>
<dbReference type="NCBIfam" id="TIGR00080">
    <property type="entry name" value="pimt"/>
    <property type="match status" value="1"/>
</dbReference>
<dbReference type="PANTHER" id="PTHR11579">
    <property type="entry name" value="PROTEIN-L-ISOASPARTATE O-METHYLTRANSFERASE"/>
    <property type="match status" value="1"/>
</dbReference>
<dbReference type="PANTHER" id="PTHR11579:SF7">
    <property type="entry name" value="PROTEIN-L-ISOASPARTATE(D-ASPARTATE) O-METHYLTRANSFERASE"/>
    <property type="match status" value="1"/>
</dbReference>
<dbReference type="Pfam" id="PF01135">
    <property type="entry name" value="PCMT"/>
    <property type="match status" value="1"/>
</dbReference>
<dbReference type="SUPFAM" id="SSF53335">
    <property type="entry name" value="S-adenosyl-L-methionine-dependent methyltransferases"/>
    <property type="match status" value="1"/>
</dbReference>
<dbReference type="PROSITE" id="PS01279">
    <property type="entry name" value="PCMT"/>
    <property type="match status" value="1"/>
</dbReference>
<comment type="function">
    <text evidence="3 4 5">Initiates the repair of damaged proteins by catalyzing methyl esterification of L-isoaspartyl and D-aspartyl residues produced by spontaneous isomerization and racemization of L-aspartyl and L-asparaginyl residues in aging peptides and proteins (PubMed:12023972, PubMed:16923807, PubMed:20424163). Acts on EIF4EBP2, microtubule-associated protein 2, calreticulin, clathrin light chains a and b, Ubiquitin C-terminal hydrolase isozyme L1, phosphatidylethanolamine-binding protein 1, stathmin, beta-synuclein and alpha-synuclein (PubMed:16923807, PubMed:20424163).</text>
</comment>
<comment type="catalytic activity">
    <reaction evidence="3 4">
        <text>[protein]-L-isoaspartate + S-adenosyl-L-methionine = [protein]-L-isoaspartate alpha-methyl ester + S-adenosyl-L-homocysteine</text>
        <dbReference type="Rhea" id="RHEA:12705"/>
        <dbReference type="Rhea" id="RHEA-COMP:12143"/>
        <dbReference type="Rhea" id="RHEA-COMP:12144"/>
        <dbReference type="ChEBI" id="CHEBI:57856"/>
        <dbReference type="ChEBI" id="CHEBI:59789"/>
        <dbReference type="ChEBI" id="CHEBI:90596"/>
        <dbReference type="ChEBI" id="CHEBI:90598"/>
        <dbReference type="EC" id="2.1.1.77"/>
    </reaction>
    <physiologicalReaction direction="left-to-right" evidence="3">
        <dbReference type="Rhea" id="RHEA:12706"/>
    </physiologicalReaction>
</comment>
<comment type="subunit">
    <text evidence="1">Monomer.</text>
</comment>
<comment type="subcellular location">
    <subcellularLocation>
        <location evidence="4">Cytoplasm</location>
        <location evidence="4">Cytosol</location>
    </subcellularLocation>
</comment>
<comment type="alternative products">
    <event type="alternative splicing"/>
    <isoform>
        <id>P23506-1</id>
        <name>1</name>
        <sequence type="displayed"/>
    </isoform>
    <isoform>
        <id>P23506-2</id>
        <name>2</name>
        <sequence type="described" ref="VSP_004717"/>
    </isoform>
</comment>
<comment type="disruption phenotype">
    <text evidence="3">The survival of Pcmt1 homozygous knockout mice drops significantly between the ages of 20 and 50 days compared to their wild-type counterparts (PubMed:12023972). They have 20 times more damaged aspartyl residues in their brains (PubMed:12023972).</text>
</comment>
<comment type="similarity">
    <text evidence="8">Belongs to the methyltransferase superfamily. L-isoaspartyl/D-aspartyl protein methyltransferase family.</text>
</comment>
<comment type="sequence caution" evidence="8">
    <conflict type="erroneous initiation">
        <sequence resource="EMBL-CDS" id="AAH49613"/>
    </conflict>
</comment>
<feature type="initiator methionine" description="Removed" evidence="1">
    <location>
        <position position="1"/>
    </location>
</feature>
<feature type="chain" id="PRO_0000111876" description="Protein-L-isoaspartate(D-aspartate) O-methyltransferase">
    <location>
        <begin position="2"/>
        <end position="227"/>
    </location>
</feature>
<feature type="active site" evidence="2">
    <location>
        <position position="60"/>
    </location>
</feature>
<feature type="binding site" evidence="1">
    <location>
        <begin position="57"/>
        <end position="60"/>
    </location>
    <ligand>
        <name>S-adenosyl-L-homocysteine</name>
        <dbReference type="ChEBI" id="CHEBI:57856"/>
    </ligand>
</feature>
<feature type="binding site" evidence="1">
    <location>
        <position position="65"/>
    </location>
    <ligand>
        <name>S-adenosyl-L-homocysteine</name>
        <dbReference type="ChEBI" id="CHEBI:57856"/>
    </ligand>
</feature>
<feature type="binding site" evidence="1">
    <location>
        <position position="89"/>
    </location>
    <ligand>
        <name>S-adenosyl-L-homocysteine</name>
        <dbReference type="ChEBI" id="CHEBI:57856"/>
    </ligand>
</feature>
<feature type="binding site" evidence="1">
    <location>
        <begin position="110"/>
        <end position="111"/>
    </location>
    <ligand>
        <name>S-adenosyl-L-homocysteine</name>
        <dbReference type="ChEBI" id="CHEBI:57856"/>
    </ligand>
</feature>
<feature type="binding site" evidence="1">
    <location>
        <begin position="142"/>
        <end position="143"/>
    </location>
    <ligand>
        <name>S-adenosyl-L-homocysteine</name>
        <dbReference type="ChEBI" id="CHEBI:57856"/>
    </ligand>
</feature>
<feature type="binding site" evidence="1">
    <location>
        <position position="217"/>
    </location>
    <ligand>
        <name>S-adenosyl-L-homocysteine</name>
        <dbReference type="ChEBI" id="CHEBI:57856"/>
    </ligand>
</feature>
<feature type="binding site" evidence="1">
    <location>
        <position position="222"/>
    </location>
    <ligand>
        <name>S-adenosyl-L-homocysteine</name>
        <dbReference type="ChEBI" id="CHEBI:57856"/>
    </ligand>
</feature>
<feature type="modified residue" description="N-acetylalanine" evidence="1">
    <location>
        <position position="2"/>
    </location>
</feature>
<feature type="splice variant" id="VSP_004717" description="In isoform 2." evidence="6 7">
    <original>WK</original>
    <variation>DEL</variation>
    <location>
        <begin position="226"/>
        <end position="227"/>
    </location>
</feature>
<accession>P23506</accession>
<accession>Q810R4</accession>
<organism>
    <name type="scientific">Mus musculus</name>
    <name type="common">Mouse</name>
    <dbReference type="NCBI Taxonomy" id="10090"/>
    <lineage>
        <taxon>Eukaryota</taxon>
        <taxon>Metazoa</taxon>
        <taxon>Chordata</taxon>
        <taxon>Craniata</taxon>
        <taxon>Vertebrata</taxon>
        <taxon>Euteleostomi</taxon>
        <taxon>Mammalia</taxon>
        <taxon>Eutheria</taxon>
        <taxon>Euarchontoglires</taxon>
        <taxon>Glires</taxon>
        <taxon>Rodentia</taxon>
        <taxon>Myomorpha</taxon>
        <taxon>Muroidea</taxon>
        <taxon>Muridae</taxon>
        <taxon>Murinae</taxon>
        <taxon>Mus</taxon>
        <taxon>Mus</taxon>
    </lineage>
</organism>
<protein>
    <recommendedName>
        <fullName evidence="9">Protein-L-isoaspartate(D-aspartate) O-methyltransferase</fullName>
        <shortName>PIMT</shortName>
        <ecNumber evidence="3 4">2.1.1.77</ecNumber>
    </recommendedName>
    <alternativeName>
        <fullName>L-isoaspartyl protein carboxyl methyltransferase</fullName>
    </alternativeName>
    <alternativeName>
        <fullName>Protein L-isoaspartyl/D-aspartyl methyltransferase</fullName>
    </alternativeName>
    <alternativeName>
        <fullName>Protein-beta-aspartate methyltransferase</fullName>
    </alternativeName>
</protein>
<proteinExistence type="evidence at protein level"/>